<name>GDL54_ARATH</name>
<comment type="subcellular location">
    <subcellularLocation>
        <location evidence="3">Secreted</location>
    </subcellularLocation>
</comment>
<comment type="similarity">
    <text evidence="3">Belongs to the 'GDSL' lipolytic enzyme family.</text>
</comment>
<keyword id="KW-0325">Glycoprotein</keyword>
<keyword id="KW-0378">Hydrolase</keyword>
<keyword id="KW-0442">Lipid degradation</keyword>
<keyword id="KW-0443">Lipid metabolism</keyword>
<keyword id="KW-1185">Reference proteome</keyword>
<keyword id="KW-0964">Secreted</keyword>
<keyword id="KW-0732">Signal</keyword>
<organism>
    <name type="scientific">Arabidopsis thaliana</name>
    <name type="common">Mouse-ear cress</name>
    <dbReference type="NCBI Taxonomy" id="3702"/>
    <lineage>
        <taxon>Eukaryota</taxon>
        <taxon>Viridiplantae</taxon>
        <taxon>Streptophyta</taxon>
        <taxon>Embryophyta</taxon>
        <taxon>Tracheophyta</taxon>
        <taxon>Spermatophyta</taxon>
        <taxon>Magnoliopsida</taxon>
        <taxon>eudicotyledons</taxon>
        <taxon>Gunneridae</taxon>
        <taxon>Pentapetalae</taxon>
        <taxon>rosids</taxon>
        <taxon>malvids</taxon>
        <taxon>Brassicales</taxon>
        <taxon>Brassicaceae</taxon>
        <taxon>Camelineae</taxon>
        <taxon>Arabidopsis</taxon>
    </lineage>
</organism>
<gene>
    <name type="ordered locus">At3g27950</name>
    <name type="ORF">K24A2.4</name>
</gene>
<feature type="signal peptide" evidence="2">
    <location>
        <begin position="1"/>
        <end position="23"/>
    </location>
</feature>
<feature type="chain" id="PRO_0000367395" description="GDSL esterase/lipase At3g27950">
    <location>
        <begin position="24"/>
        <end position="371"/>
    </location>
</feature>
<feature type="active site" description="Nucleophile" evidence="1">
    <location>
        <position position="39"/>
    </location>
</feature>
<feature type="active site" evidence="1">
    <location>
        <position position="334"/>
    </location>
</feature>
<feature type="active site" evidence="1">
    <location>
        <position position="337"/>
    </location>
</feature>
<feature type="glycosylation site" description="N-linked (GlcNAc...) asparagine" evidence="2">
    <location>
        <position position="82"/>
    </location>
</feature>
<feature type="glycosylation site" description="N-linked (GlcNAc...) asparagine" evidence="2">
    <location>
        <position position="143"/>
    </location>
</feature>
<feature type="glycosylation site" description="N-linked (GlcNAc...) asparagine" evidence="2">
    <location>
        <position position="178"/>
    </location>
</feature>
<feature type="glycosylation site" description="N-linked (GlcNAc...) asparagine" evidence="2">
    <location>
        <position position="194"/>
    </location>
</feature>
<feature type="glycosylation site" description="N-linked (GlcNAc...) asparagine" evidence="2">
    <location>
        <position position="315"/>
    </location>
</feature>
<accession>Q9LII9</accession>
<accession>F4IXS5</accession>
<dbReference type="EC" id="3.1.1.-"/>
<dbReference type="EMBL" id="AP001302">
    <property type="protein sequence ID" value="BAB01482.1"/>
    <property type="molecule type" value="Genomic_DNA"/>
</dbReference>
<dbReference type="EMBL" id="CP002686">
    <property type="status" value="NOT_ANNOTATED_CDS"/>
    <property type="molecule type" value="Genomic_DNA"/>
</dbReference>
<dbReference type="SMR" id="Q9LII9"/>
<dbReference type="FunCoup" id="Q9LII9">
    <property type="interactions" value="96"/>
</dbReference>
<dbReference type="GlyGen" id="Q9LII9">
    <property type="glycosylation" value="5 sites"/>
</dbReference>
<dbReference type="PaxDb" id="3702-AT3G27950.1"/>
<dbReference type="ProteomicsDB" id="224762"/>
<dbReference type="Araport" id="AT3G27950"/>
<dbReference type="TAIR" id="AT3G27950"/>
<dbReference type="eggNOG" id="ENOG502QQSM">
    <property type="taxonomic scope" value="Eukaryota"/>
</dbReference>
<dbReference type="HOGENOM" id="CLU_015101_2_0_1"/>
<dbReference type="InParanoid" id="Q9LII9"/>
<dbReference type="PhylomeDB" id="Q9LII9"/>
<dbReference type="BioCyc" id="ARA:AT3G27950-MONOMER"/>
<dbReference type="PRO" id="PR:Q9LII9"/>
<dbReference type="Proteomes" id="UP000006548">
    <property type="component" value="Chromosome 3"/>
</dbReference>
<dbReference type="ExpressionAtlas" id="Q9LII9">
    <property type="expression patterns" value="baseline and differential"/>
</dbReference>
<dbReference type="GO" id="GO:0005576">
    <property type="term" value="C:extracellular region"/>
    <property type="evidence" value="ECO:0007669"/>
    <property type="project" value="UniProtKB-SubCell"/>
</dbReference>
<dbReference type="GO" id="GO:0016788">
    <property type="term" value="F:hydrolase activity, acting on ester bonds"/>
    <property type="evidence" value="ECO:0007669"/>
    <property type="project" value="InterPro"/>
</dbReference>
<dbReference type="GO" id="GO:0016042">
    <property type="term" value="P:lipid catabolic process"/>
    <property type="evidence" value="ECO:0007669"/>
    <property type="project" value="UniProtKB-KW"/>
</dbReference>
<dbReference type="CDD" id="cd01837">
    <property type="entry name" value="SGNH_plant_lipase_like"/>
    <property type="match status" value="1"/>
</dbReference>
<dbReference type="Gene3D" id="3.40.50.1110">
    <property type="entry name" value="SGNH hydrolase"/>
    <property type="match status" value="1"/>
</dbReference>
<dbReference type="InterPro" id="IPR001087">
    <property type="entry name" value="GDSL"/>
</dbReference>
<dbReference type="InterPro" id="IPR036514">
    <property type="entry name" value="SGNH_hydro_sf"/>
</dbReference>
<dbReference type="InterPro" id="IPR035669">
    <property type="entry name" value="SGNH_plant_lipase-like"/>
</dbReference>
<dbReference type="PANTHER" id="PTHR22835:SF555">
    <property type="entry name" value="GDSL-LIKE LIPASE_ACYLHYDROLASE"/>
    <property type="match status" value="1"/>
</dbReference>
<dbReference type="PANTHER" id="PTHR22835">
    <property type="entry name" value="ZINC FINGER FYVE DOMAIN CONTAINING PROTEIN"/>
    <property type="match status" value="1"/>
</dbReference>
<dbReference type="Pfam" id="PF00657">
    <property type="entry name" value="Lipase_GDSL"/>
    <property type="match status" value="1"/>
</dbReference>
<dbReference type="SUPFAM" id="SSF52266">
    <property type="entry name" value="SGNH hydrolase"/>
    <property type="match status" value="1"/>
</dbReference>
<reference key="1">
    <citation type="journal article" date="2000" name="DNA Res.">
        <title>Structural analysis of Arabidopsis thaliana chromosome 3. II. Sequence features of the 4,251,695 bp regions covered by 90 P1, TAC and BAC clones.</title>
        <authorList>
            <person name="Kaneko T."/>
            <person name="Katoh T."/>
            <person name="Sato S."/>
            <person name="Nakamura Y."/>
            <person name="Asamizu E."/>
            <person name="Tabata S."/>
        </authorList>
    </citation>
    <scope>NUCLEOTIDE SEQUENCE [LARGE SCALE GENOMIC DNA]</scope>
    <source>
        <strain>cv. Columbia</strain>
    </source>
</reference>
<reference key="2">
    <citation type="journal article" date="2017" name="Plant J.">
        <title>Araport11: a complete reannotation of the Arabidopsis thaliana reference genome.</title>
        <authorList>
            <person name="Cheng C.Y."/>
            <person name="Krishnakumar V."/>
            <person name="Chan A.P."/>
            <person name="Thibaud-Nissen F."/>
            <person name="Schobel S."/>
            <person name="Town C.D."/>
        </authorList>
    </citation>
    <scope>GENOME REANNOTATION</scope>
    <source>
        <strain>cv. Columbia</strain>
    </source>
</reference>
<reference key="3">
    <citation type="journal article" date="2004" name="Prog. Lipid Res.">
        <title>GDSL family of serine esterases/lipases.</title>
        <authorList>
            <person name="Akoh C.C."/>
            <person name="Lee G.-C."/>
            <person name="Liaw Y.-C."/>
            <person name="Huang T.-H."/>
            <person name="Shaw J.-F."/>
        </authorList>
    </citation>
    <scope>REVIEW</scope>
</reference>
<reference key="4">
    <citation type="journal article" date="2008" name="Pak. J. Biol. Sci.">
        <title>Sequence analysis of GDSL lipase gene family in Arabidopsis thaliana.</title>
        <authorList>
            <person name="Ling H."/>
        </authorList>
    </citation>
    <scope>GENE FAMILY</scope>
</reference>
<evidence type="ECO:0000250" key="1"/>
<evidence type="ECO:0000255" key="2"/>
<evidence type="ECO:0000305" key="3"/>
<proteinExistence type="evidence at transcript level"/>
<sequence>MAISKITLAIIVLLLGFTEKLSALSSSCNFPAVFNFGDSNSDTGAISAAIGEVPPPNGVAFFGRSAGRHSDGRLIIDFITENLTLPYLTPYLDSVGANYRHGANFATGGSCIRPTLACFSPFHLGTQVSQFIHFKTRTLSLYNQTNGKFNRLSHTNYFSKALYTLDIGQNDLAIGFQNMTEEQLKATIPLIIENFTIALKLLYKEGARFFSIHNTGPTGCLPYLLKAFPAIPRDPYGCLKPLNNVAIEFNKQLKNKITQLKKELPSSFFTYVDVYSAKYNLITKAKALGFIDPFDYCCVGAIGRGMGCGKTIFLNGTELYSSSCQNRKNFISWDGIHYTETANMLVANRILDGSISDPPLPTQKACKLTKK</sequence>
<protein>
    <recommendedName>
        <fullName>GDSL esterase/lipase At3g27950</fullName>
        <ecNumber>3.1.1.-</ecNumber>
    </recommendedName>
    <alternativeName>
        <fullName>Extracellular lipase At3g27950</fullName>
    </alternativeName>
</protein>